<sequence length="563" mass="61535">MTTQNRFRDNEIRAPQGTQLTAKSWLTEAALRMLMNNLDPDVAENPKELVVYGGIGRAARNWECYDKIVESLINLNDDETLLIQSGKPVGIFKTHSNAPRVLIANSNLVPHWANWEHFNELDAKGLAMYGQMTAGSWIYIGSQGIVQGTYETFVEAGRQHFGGSLKGRWVLTAGLGGMGGAQPLAATLAGACSLNIECQQSRIDFRLKTRYVDEQATDLDDALARIEKYTATGVAVSIALCGNAAEILPELVRRGVRPDMVTDQTSAHDPLNGYLPKGWNWEEYRQRAQHEPALVINAAKISMAEHVEAMLAFHNMGIPTFDYGNNIRQMAHDMGVIRAFDFPGFVPAYIRPLFCRGIGPFRWVALSGNPDDIYKTDAKVKALIPDDAHLHHWLDMARERIRFQGLPARICWVGLGQRAKLGLAFNEMVRSGELSAPVVIGRDHLDSGSVASPNRETEAMQDGSDAVSDWPLLNALLNTASGATWVSLHHGGGVGMGFSQHSGMVVVCDGSDEAAERIARVLHNDPATGVMRHADAGYDIAVNCAQEQGLNLPMVAATQGKKS</sequence>
<protein>
    <recommendedName>
        <fullName evidence="1">Urocanate hydratase</fullName>
        <shortName evidence="1">Urocanase</shortName>
        <ecNumber evidence="1">4.2.1.49</ecNumber>
    </recommendedName>
    <alternativeName>
        <fullName evidence="1">Imidazolonepropionate hydrolase</fullName>
    </alternativeName>
</protein>
<proteinExistence type="inferred from homology"/>
<comment type="function">
    <text evidence="1">Catalyzes the conversion of urocanate to 4-imidazolone-5-propionate.</text>
</comment>
<comment type="catalytic activity">
    <reaction evidence="1">
        <text>4-imidazolone-5-propanoate = trans-urocanate + H2O</text>
        <dbReference type="Rhea" id="RHEA:13101"/>
        <dbReference type="ChEBI" id="CHEBI:15377"/>
        <dbReference type="ChEBI" id="CHEBI:17771"/>
        <dbReference type="ChEBI" id="CHEBI:77893"/>
        <dbReference type="EC" id="4.2.1.49"/>
    </reaction>
</comment>
<comment type="cofactor">
    <cofactor evidence="1">
        <name>NAD(+)</name>
        <dbReference type="ChEBI" id="CHEBI:57540"/>
    </cofactor>
    <text evidence="1">Binds 1 NAD(+) per subunit.</text>
</comment>
<comment type="pathway">
    <text evidence="1">Amino-acid degradation; L-histidine degradation into L-glutamate; N-formimidoyl-L-glutamate from L-histidine: step 2/3.</text>
</comment>
<comment type="subcellular location">
    <subcellularLocation>
        <location evidence="1">Cytoplasm</location>
    </subcellularLocation>
</comment>
<comment type="similarity">
    <text evidence="1">Belongs to the urocanase family.</text>
</comment>
<name>HUTU_YERPA</name>
<reference key="1">
    <citation type="journal article" date="2006" name="J. Bacteriol.">
        <title>Complete genome sequence of Yersinia pestis strains Antiqua and Nepal516: evidence of gene reduction in an emerging pathogen.</title>
        <authorList>
            <person name="Chain P.S.G."/>
            <person name="Hu P."/>
            <person name="Malfatti S.A."/>
            <person name="Radnedge L."/>
            <person name="Larimer F."/>
            <person name="Vergez L.M."/>
            <person name="Worsham P."/>
            <person name="Chu M.C."/>
            <person name="Andersen G.L."/>
        </authorList>
    </citation>
    <scope>NUCLEOTIDE SEQUENCE [LARGE SCALE GENOMIC DNA]</scope>
    <source>
        <strain>Antiqua</strain>
    </source>
</reference>
<dbReference type="EC" id="4.2.1.49" evidence="1"/>
<dbReference type="EMBL" id="CP000308">
    <property type="protein sequence ID" value="ABG16066.1"/>
    <property type="molecule type" value="Genomic_DNA"/>
</dbReference>
<dbReference type="RefSeq" id="WP_002209576.1">
    <property type="nucleotide sequence ID" value="NZ_CP009906.1"/>
</dbReference>
<dbReference type="SMR" id="Q1C0F6"/>
<dbReference type="GeneID" id="57974694"/>
<dbReference type="KEGG" id="ypa:YPA_4105"/>
<dbReference type="UniPathway" id="UPA00379">
    <property type="reaction ID" value="UER00550"/>
</dbReference>
<dbReference type="Proteomes" id="UP000001971">
    <property type="component" value="Chromosome"/>
</dbReference>
<dbReference type="GO" id="GO:0005737">
    <property type="term" value="C:cytoplasm"/>
    <property type="evidence" value="ECO:0007669"/>
    <property type="project" value="UniProtKB-SubCell"/>
</dbReference>
<dbReference type="GO" id="GO:0016153">
    <property type="term" value="F:urocanate hydratase activity"/>
    <property type="evidence" value="ECO:0007669"/>
    <property type="project" value="UniProtKB-UniRule"/>
</dbReference>
<dbReference type="GO" id="GO:0019556">
    <property type="term" value="P:L-histidine catabolic process to glutamate and formamide"/>
    <property type="evidence" value="ECO:0007669"/>
    <property type="project" value="UniProtKB-UniPathway"/>
</dbReference>
<dbReference type="GO" id="GO:0019557">
    <property type="term" value="P:L-histidine catabolic process to glutamate and formate"/>
    <property type="evidence" value="ECO:0007669"/>
    <property type="project" value="UniProtKB-UniPathway"/>
</dbReference>
<dbReference type="FunFam" id="3.40.50.10730:FF:000001">
    <property type="entry name" value="Urocanate hydratase"/>
    <property type="match status" value="1"/>
</dbReference>
<dbReference type="Gene3D" id="3.40.50.10730">
    <property type="entry name" value="Urocanase like domains"/>
    <property type="match status" value="1"/>
</dbReference>
<dbReference type="Gene3D" id="3.40.1770.10">
    <property type="entry name" value="Urocanase superfamily"/>
    <property type="match status" value="1"/>
</dbReference>
<dbReference type="HAMAP" id="MF_00577">
    <property type="entry name" value="HutU"/>
    <property type="match status" value="1"/>
</dbReference>
<dbReference type="InterPro" id="IPR055351">
    <property type="entry name" value="Urocanase"/>
</dbReference>
<dbReference type="InterPro" id="IPR023637">
    <property type="entry name" value="Urocanase-like"/>
</dbReference>
<dbReference type="InterPro" id="IPR035401">
    <property type="entry name" value="Urocanase_C"/>
</dbReference>
<dbReference type="InterPro" id="IPR038364">
    <property type="entry name" value="Urocanase_central_sf"/>
</dbReference>
<dbReference type="InterPro" id="IPR023636">
    <property type="entry name" value="Urocanase_CS"/>
</dbReference>
<dbReference type="InterPro" id="IPR035400">
    <property type="entry name" value="Urocanase_N"/>
</dbReference>
<dbReference type="InterPro" id="IPR035085">
    <property type="entry name" value="Urocanase_Rossmann-like"/>
</dbReference>
<dbReference type="InterPro" id="IPR036190">
    <property type="entry name" value="Urocanase_sf"/>
</dbReference>
<dbReference type="NCBIfam" id="TIGR01228">
    <property type="entry name" value="hutU"/>
    <property type="match status" value="1"/>
</dbReference>
<dbReference type="NCBIfam" id="NF003820">
    <property type="entry name" value="PRK05414.1"/>
    <property type="match status" value="1"/>
</dbReference>
<dbReference type="PANTHER" id="PTHR12216">
    <property type="entry name" value="UROCANATE HYDRATASE"/>
    <property type="match status" value="1"/>
</dbReference>
<dbReference type="PANTHER" id="PTHR12216:SF4">
    <property type="entry name" value="UROCANATE HYDRATASE"/>
    <property type="match status" value="1"/>
</dbReference>
<dbReference type="Pfam" id="PF01175">
    <property type="entry name" value="Urocanase"/>
    <property type="match status" value="1"/>
</dbReference>
<dbReference type="Pfam" id="PF17392">
    <property type="entry name" value="Urocanase_C"/>
    <property type="match status" value="1"/>
</dbReference>
<dbReference type="Pfam" id="PF17391">
    <property type="entry name" value="Urocanase_N"/>
    <property type="match status" value="1"/>
</dbReference>
<dbReference type="PIRSF" id="PIRSF001423">
    <property type="entry name" value="Urocanate_hydrat"/>
    <property type="match status" value="1"/>
</dbReference>
<dbReference type="SUPFAM" id="SSF111326">
    <property type="entry name" value="Urocanase"/>
    <property type="match status" value="1"/>
</dbReference>
<dbReference type="PROSITE" id="PS01233">
    <property type="entry name" value="UROCANASE"/>
    <property type="match status" value="1"/>
</dbReference>
<organism>
    <name type="scientific">Yersinia pestis bv. Antiqua (strain Antiqua)</name>
    <dbReference type="NCBI Taxonomy" id="360102"/>
    <lineage>
        <taxon>Bacteria</taxon>
        <taxon>Pseudomonadati</taxon>
        <taxon>Pseudomonadota</taxon>
        <taxon>Gammaproteobacteria</taxon>
        <taxon>Enterobacterales</taxon>
        <taxon>Yersiniaceae</taxon>
        <taxon>Yersinia</taxon>
    </lineage>
</organism>
<evidence type="ECO:0000255" key="1">
    <source>
        <dbReference type="HAMAP-Rule" id="MF_00577"/>
    </source>
</evidence>
<feature type="chain" id="PRO_1000025163" description="Urocanate hydratase">
    <location>
        <begin position="1"/>
        <end position="563"/>
    </location>
</feature>
<feature type="active site" evidence="1">
    <location>
        <position position="411"/>
    </location>
</feature>
<feature type="binding site" evidence="1">
    <location>
        <begin position="53"/>
        <end position="54"/>
    </location>
    <ligand>
        <name>NAD(+)</name>
        <dbReference type="ChEBI" id="CHEBI:57540"/>
    </ligand>
</feature>
<feature type="binding site" evidence="1">
    <location>
        <position position="131"/>
    </location>
    <ligand>
        <name>NAD(+)</name>
        <dbReference type="ChEBI" id="CHEBI:57540"/>
    </ligand>
</feature>
<feature type="binding site" evidence="1">
    <location>
        <begin position="177"/>
        <end position="179"/>
    </location>
    <ligand>
        <name>NAD(+)</name>
        <dbReference type="ChEBI" id="CHEBI:57540"/>
    </ligand>
</feature>
<feature type="binding site" evidence="1">
    <location>
        <position position="197"/>
    </location>
    <ligand>
        <name>NAD(+)</name>
        <dbReference type="ChEBI" id="CHEBI:57540"/>
    </ligand>
</feature>
<feature type="binding site" evidence="1">
    <location>
        <position position="202"/>
    </location>
    <ligand>
        <name>NAD(+)</name>
        <dbReference type="ChEBI" id="CHEBI:57540"/>
    </ligand>
</feature>
<feature type="binding site" evidence="1">
    <location>
        <begin position="243"/>
        <end position="244"/>
    </location>
    <ligand>
        <name>NAD(+)</name>
        <dbReference type="ChEBI" id="CHEBI:57540"/>
    </ligand>
</feature>
<feature type="binding site" evidence="1">
    <location>
        <begin position="264"/>
        <end position="268"/>
    </location>
    <ligand>
        <name>NAD(+)</name>
        <dbReference type="ChEBI" id="CHEBI:57540"/>
    </ligand>
</feature>
<feature type="binding site" evidence="1">
    <location>
        <begin position="274"/>
        <end position="275"/>
    </location>
    <ligand>
        <name>NAD(+)</name>
        <dbReference type="ChEBI" id="CHEBI:57540"/>
    </ligand>
</feature>
<feature type="binding site" evidence="1">
    <location>
        <position position="323"/>
    </location>
    <ligand>
        <name>NAD(+)</name>
        <dbReference type="ChEBI" id="CHEBI:57540"/>
    </ligand>
</feature>
<feature type="binding site" evidence="1">
    <location>
        <position position="493"/>
    </location>
    <ligand>
        <name>NAD(+)</name>
        <dbReference type="ChEBI" id="CHEBI:57540"/>
    </ligand>
</feature>
<accession>Q1C0F6</accession>
<gene>
    <name evidence="1" type="primary">hutU</name>
    <name type="ordered locus">YPA_4105</name>
</gene>
<keyword id="KW-0963">Cytoplasm</keyword>
<keyword id="KW-0369">Histidine metabolism</keyword>
<keyword id="KW-0456">Lyase</keyword>
<keyword id="KW-0520">NAD</keyword>